<reference evidence="3" key="1">
    <citation type="journal article" date="2003" name="Peptides">
        <title>Mass spectrometric analysis of putative capa-gene products in Musca domestica and Neobellieria bullata.</title>
        <authorList>
            <person name="Predel R."/>
            <person name="Russell W.K."/>
            <person name="Tichy S.E."/>
            <person name="Russell D.H."/>
            <person name="Nachman R.J."/>
        </authorList>
    </citation>
    <scope>PROTEIN SEQUENCE</scope>
    <scope>TISSUE SPECIFICITY</scope>
    <scope>MASS SPECTROMETRY</scope>
    <scope>AMIDATION AT LEU-9</scope>
    <source>
        <tissue evidence="1">Ganglion</tissue>
    </source>
</reference>
<organism>
    <name type="scientific">Sarcophaga bullata</name>
    <name type="common">Grey flesh fly</name>
    <name type="synonym">Neobellieria bullata</name>
    <dbReference type="NCBI Taxonomy" id="7385"/>
    <lineage>
        <taxon>Eukaryota</taxon>
        <taxon>Metazoa</taxon>
        <taxon>Ecdysozoa</taxon>
        <taxon>Arthropoda</taxon>
        <taxon>Hexapoda</taxon>
        <taxon>Insecta</taxon>
        <taxon>Pterygota</taxon>
        <taxon>Neoptera</taxon>
        <taxon>Endopterygota</taxon>
        <taxon>Diptera</taxon>
        <taxon>Brachycera</taxon>
        <taxon>Muscomorpha</taxon>
        <taxon>Oestroidea</taxon>
        <taxon>Sarcophagidae</taxon>
        <taxon>Sarcophaga</taxon>
        <taxon>Neobellieria</taxon>
    </lineage>
</organism>
<sequence>AGLLVYPRL</sequence>
<keyword id="KW-0027">Amidation</keyword>
<keyword id="KW-0903">Direct protein sequencing</keyword>
<keyword id="KW-0527">Neuropeptide</keyword>
<keyword id="KW-0964">Secreted</keyword>
<comment type="function">
    <text evidence="3">Mediates visceral muscle contractile activity (myotropic activity).</text>
</comment>
<comment type="subcellular location">
    <subcellularLocation>
        <location evidence="3">Secreted</location>
    </subcellularLocation>
</comment>
<comment type="tissue specificity">
    <text evidence="1">Dorsal ganglionic sheath of fused ventral nerve cord.</text>
</comment>
<comment type="mass spectrometry"/>
<comment type="similarity">
    <text evidence="2">Belongs to the periviscerokinin family.</text>
</comment>
<protein>
    <recommendedName>
        <fullName>Periviscerokinin-2</fullName>
    </recommendedName>
    <alternativeName>
        <fullName>Neobu-PVK-2</fullName>
    </alternativeName>
</protein>
<dbReference type="GO" id="GO:0005576">
    <property type="term" value="C:extracellular region"/>
    <property type="evidence" value="ECO:0007669"/>
    <property type="project" value="UniProtKB-SubCell"/>
</dbReference>
<dbReference type="GO" id="GO:0007218">
    <property type="term" value="P:neuropeptide signaling pathway"/>
    <property type="evidence" value="ECO:0007669"/>
    <property type="project" value="UniProtKB-KW"/>
</dbReference>
<name>PVK2_SARBU</name>
<proteinExistence type="evidence at protein level"/>
<evidence type="ECO:0000269" key="1">
    <source>
    </source>
</evidence>
<evidence type="ECO:0000303" key="2">
    <source>
    </source>
</evidence>
<evidence type="ECO:0000305" key="3"/>
<feature type="peptide" id="PRO_0000044278" description="Periviscerokinin-2">
    <location>
        <begin position="1"/>
        <end position="9"/>
    </location>
</feature>
<feature type="modified residue" description="Leucine amide" evidence="1">
    <location>
        <position position="9"/>
    </location>
</feature>
<feature type="unsure residue" description="L or I" evidence="1">
    <location>
        <position position="3"/>
    </location>
</feature>
<feature type="unsure residue" description="L or I" evidence="1">
    <location>
        <position position="4"/>
    </location>
</feature>
<feature type="unsure residue" description="L or I" evidence="1">
    <location>
        <position position="9"/>
    </location>
</feature>
<accession>P84353</accession>